<dbReference type="EC" id="6.3.2.9" evidence="1"/>
<dbReference type="EMBL" id="BA000028">
    <property type="protein sequence ID" value="BAC13425.1"/>
    <property type="molecule type" value="Genomic_DNA"/>
</dbReference>
<dbReference type="RefSeq" id="WP_011065870.1">
    <property type="nucleotide sequence ID" value="NC_004193.1"/>
</dbReference>
<dbReference type="SMR" id="Q8ER50"/>
<dbReference type="STRING" id="221109.gene:10733709"/>
<dbReference type="KEGG" id="oih:OB1469"/>
<dbReference type="eggNOG" id="COG0771">
    <property type="taxonomic scope" value="Bacteria"/>
</dbReference>
<dbReference type="HOGENOM" id="CLU_032540_0_1_9"/>
<dbReference type="OrthoDB" id="9809796at2"/>
<dbReference type="PhylomeDB" id="Q8ER50"/>
<dbReference type="UniPathway" id="UPA00219"/>
<dbReference type="Proteomes" id="UP000000822">
    <property type="component" value="Chromosome"/>
</dbReference>
<dbReference type="GO" id="GO:0005737">
    <property type="term" value="C:cytoplasm"/>
    <property type="evidence" value="ECO:0007669"/>
    <property type="project" value="UniProtKB-SubCell"/>
</dbReference>
<dbReference type="GO" id="GO:0005524">
    <property type="term" value="F:ATP binding"/>
    <property type="evidence" value="ECO:0007669"/>
    <property type="project" value="UniProtKB-UniRule"/>
</dbReference>
<dbReference type="GO" id="GO:0008764">
    <property type="term" value="F:UDP-N-acetylmuramoylalanine-D-glutamate ligase activity"/>
    <property type="evidence" value="ECO:0007669"/>
    <property type="project" value="UniProtKB-UniRule"/>
</dbReference>
<dbReference type="GO" id="GO:0051301">
    <property type="term" value="P:cell division"/>
    <property type="evidence" value="ECO:0007669"/>
    <property type="project" value="UniProtKB-KW"/>
</dbReference>
<dbReference type="GO" id="GO:0071555">
    <property type="term" value="P:cell wall organization"/>
    <property type="evidence" value="ECO:0007669"/>
    <property type="project" value="UniProtKB-KW"/>
</dbReference>
<dbReference type="GO" id="GO:0009252">
    <property type="term" value="P:peptidoglycan biosynthetic process"/>
    <property type="evidence" value="ECO:0007669"/>
    <property type="project" value="UniProtKB-UniRule"/>
</dbReference>
<dbReference type="GO" id="GO:0008360">
    <property type="term" value="P:regulation of cell shape"/>
    <property type="evidence" value="ECO:0007669"/>
    <property type="project" value="UniProtKB-KW"/>
</dbReference>
<dbReference type="Gene3D" id="3.90.190.20">
    <property type="entry name" value="Mur ligase, C-terminal domain"/>
    <property type="match status" value="1"/>
</dbReference>
<dbReference type="Gene3D" id="3.40.1190.10">
    <property type="entry name" value="Mur-like, catalytic domain"/>
    <property type="match status" value="1"/>
</dbReference>
<dbReference type="Gene3D" id="3.40.50.720">
    <property type="entry name" value="NAD(P)-binding Rossmann-like Domain"/>
    <property type="match status" value="1"/>
</dbReference>
<dbReference type="HAMAP" id="MF_00639">
    <property type="entry name" value="MurD"/>
    <property type="match status" value="1"/>
</dbReference>
<dbReference type="InterPro" id="IPR036565">
    <property type="entry name" value="Mur-like_cat_sf"/>
</dbReference>
<dbReference type="InterPro" id="IPR004101">
    <property type="entry name" value="Mur_ligase_C"/>
</dbReference>
<dbReference type="InterPro" id="IPR036615">
    <property type="entry name" value="Mur_ligase_C_dom_sf"/>
</dbReference>
<dbReference type="InterPro" id="IPR013221">
    <property type="entry name" value="Mur_ligase_cen"/>
</dbReference>
<dbReference type="InterPro" id="IPR005762">
    <property type="entry name" value="MurD"/>
</dbReference>
<dbReference type="NCBIfam" id="TIGR01087">
    <property type="entry name" value="murD"/>
    <property type="match status" value="1"/>
</dbReference>
<dbReference type="PANTHER" id="PTHR43692">
    <property type="entry name" value="UDP-N-ACETYLMURAMOYLALANINE--D-GLUTAMATE LIGASE"/>
    <property type="match status" value="1"/>
</dbReference>
<dbReference type="PANTHER" id="PTHR43692:SF1">
    <property type="entry name" value="UDP-N-ACETYLMURAMOYLALANINE--D-GLUTAMATE LIGASE"/>
    <property type="match status" value="1"/>
</dbReference>
<dbReference type="Pfam" id="PF02875">
    <property type="entry name" value="Mur_ligase_C"/>
    <property type="match status" value="1"/>
</dbReference>
<dbReference type="Pfam" id="PF08245">
    <property type="entry name" value="Mur_ligase_M"/>
    <property type="match status" value="1"/>
</dbReference>
<dbReference type="Pfam" id="PF21799">
    <property type="entry name" value="MurD-like_N"/>
    <property type="match status" value="1"/>
</dbReference>
<dbReference type="SUPFAM" id="SSF51984">
    <property type="entry name" value="MurCD N-terminal domain"/>
    <property type="match status" value="1"/>
</dbReference>
<dbReference type="SUPFAM" id="SSF53623">
    <property type="entry name" value="MurD-like peptide ligases, catalytic domain"/>
    <property type="match status" value="1"/>
</dbReference>
<dbReference type="SUPFAM" id="SSF53244">
    <property type="entry name" value="MurD-like peptide ligases, peptide-binding domain"/>
    <property type="match status" value="1"/>
</dbReference>
<comment type="function">
    <text evidence="1">Cell wall formation. Catalyzes the addition of glutamate to the nucleotide precursor UDP-N-acetylmuramoyl-L-alanine (UMA).</text>
</comment>
<comment type="catalytic activity">
    <reaction evidence="1">
        <text>UDP-N-acetyl-alpha-D-muramoyl-L-alanine + D-glutamate + ATP = UDP-N-acetyl-alpha-D-muramoyl-L-alanyl-D-glutamate + ADP + phosphate + H(+)</text>
        <dbReference type="Rhea" id="RHEA:16429"/>
        <dbReference type="ChEBI" id="CHEBI:15378"/>
        <dbReference type="ChEBI" id="CHEBI:29986"/>
        <dbReference type="ChEBI" id="CHEBI:30616"/>
        <dbReference type="ChEBI" id="CHEBI:43474"/>
        <dbReference type="ChEBI" id="CHEBI:83898"/>
        <dbReference type="ChEBI" id="CHEBI:83900"/>
        <dbReference type="ChEBI" id="CHEBI:456216"/>
        <dbReference type="EC" id="6.3.2.9"/>
    </reaction>
</comment>
<comment type="pathway">
    <text evidence="1">Cell wall biogenesis; peptidoglycan biosynthesis.</text>
</comment>
<comment type="subcellular location">
    <subcellularLocation>
        <location evidence="1">Cytoplasm</location>
    </subcellularLocation>
</comment>
<comment type="similarity">
    <text evidence="1">Belongs to the MurCDEF family.</text>
</comment>
<accession>Q8ER50</accession>
<sequence length="449" mass="49047">MNVLTNFPYQHVLVLGLAKSGTAAANVLLQNHIQVTINDGMATLEDATVQKLQTMGAELVLGSHPISVLDGKDLIVKNPGIRYDNVIVEEAQRRGIPVISEVELVHYLTNQPVIGITGSNGKTTTTTLITEMLDRSNVSVKVAGNIGVVATEVASSLQSDEKMVMELSSFQLQGIDQLQFSTAVLLNLFEAHLDYHGSFENYVEAKCNIFKSQNKHDYLIYNADDDNVSAAIKTAEATKVPFSSSRPLADGAWMDDDFLYYKDEKIIAIRDIVLVGKHNMENILAAIATAKLNGATNEGIVQVLTTFSGVKHRLEFVGVINGRYIYNDSKATNILATKKALAAFNKNVVLLAGGLDRGNTFEELIPYLHHVKAMVVFGETAGKLKDAGVAANIPVIEKALDVQHAVEVAFALTDEQDTILLSPACASWDQYKTFEERGDMFIQALHRLK</sequence>
<proteinExistence type="inferred from homology"/>
<reference key="1">
    <citation type="journal article" date="2002" name="Nucleic Acids Res.">
        <title>Genome sequence of Oceanobacillus iheyensis isolated from the Iheya Ridge and its unexpected adaptive capabilities to extreme environments.</title>
        <authorList>
            <person name="Takami H."/>
            <person name="Takaki Y."/>
            <person name="Uchiyama I."/>
        </authorList>
    </citation>
    <scope>NUCLEOTIDE SEQUENCE [LARGE SCALE GENOMIC DNA]</scope>
    <source>
        <strain>DSM 14371 / CIP 107618 / JCM 11309 / KCTC 3954 / HTE831</strain>
    </source>
</reference>
<name>MURD_OCEIH</name>
<gene>
    <name evidence="1" type="primary">murD</name>
    <name type="ordered locus">OB1469</name>
</gene>
<protein>
    <recommendedName>
        <fullName evidence="1">UDP-N-acetylmuramoylalanine--D-glutamate ligase</fullName>
        <ecNumber evidence="1">6.3.2.9</ecNumber>
    </recommendedName>
    <alternativeName>
        <fullName evidence="1">D-glutamic acid-adding enzyme</fullName>
    </alternativeName>
    <alternativeName>
        <fullName evidence="1">UDP-N-acetylmuramoyl-L-alanyl-D-glutamate synthetase</fullName>
    </alternativeName>
</protein>
<keyword id="KW-0067">ATP-binding</keyword>
<keyword id="KW-0131">Cell cycle</keyword>
<keyword id="KW-0132">Cell division</keyword>
<keyword id="KW-0133">Cell shape</keyword>
<keyword id="KW-0961">Cell wall biogenesis/degradation</keyword>
<keyword id="KW-0963">Cytoplasm</keyword>
<keyword id="KW-0436">Ligase</keyword>
<keyword id="KW-0547">Nucleotide-binding</keyword>
<keyword id="KW-0573">Peptidoglycan synthesis</keyword>
<keyword id="KW-1185">Reference proteome</keyword>
<evidence type="ECO:0000255" key="1">
    <source>
        <dbReference type="HAMAP-Rule" id="MF_00639"/>
    </source>
</evidence>
<organism>
    <name type="scientific">Oceanobacillus iheyensis (strain DSM 14371 / CIP 107618 / JCM 11309 / KCTC 3954 / HTE831)</name>
    <dbReference type="NCBI Taxonomy" id="221109"/>
    <lineage>
        <taxon>Bacteria</taxon>
        <taxon>Bacillati</taxon>
        <taxon>Bacillota</taxon>
        <taxon>Bacilli</taxon>
        <taxon>Bacillales</taxon>
        <taxon>Bacillaceae</taxon>
        <taxon>Oceanobacillus</taxon>
    </lineage>
</organism>
<feature type="chain" id="PRO_0000109052" description="UDP-N-acetylmuramoylalanine--D-glutamate ligase">
    <location>
        <begin position="1"/>
        <end position="449"/>
    </location>
</feature>
<feature type="binding site" evidence="1">
    <location>
        <begin position="118"/>
        <end position="124"/>
    </location>
    <ligand>
        <name>ATP</name>
        <dbReference type="ChEBI" id="CHEBI:30616"/>
    </ligand>
</feature>